<reference key="1">
    <citation type="journal article" date="2008" name="J. Bacteriol.">
        <title>The pangenome structure of Escherichia coli: comparative genomic analysis of E. coli commensal and pathogenic isolates.</title>
        <authorList>
            <person name="Rasko D.A."/>
            <person name="Rosovitz M.J."/>
            <person name="Myers G.S.A."/>
            <person name="Mongodin E.F."/>
            <person name="Fricke W.F."/>
            <person name="Gajer P."/>
            <person name="Crabtree J."/>
            <person name="Sebaihia M."/>
            <person name="Thomson N.R."/>
            <person name="Chaudhuri R."/>
            <person name="Henderson I.R."/>
            <person name="Sperandio V."/>
            <person name="Ravel J."/>
        </authorList>
    </citation>
    <scope>NUCLEOTIDE SEQUENCE [LARGE SCALE GENOMIC DNA]</scope>
    <source>
        <strain>HS</strain>
    </source>
</reference>
<sequence length="447" mass="49921">MTTILKHLPVGQRIGIAFSGGLDTSAALLWMRQKGAVPYAYTANLGQPDEEDYDAIPRRAMEYGAENARLIDCRKQLVAEGIAAIQCGAFHNTTGGLTYFNTTPLGRAVTGTMLVAAMKEDGVNIWGDGSTYKGNDIERFYRYGLLTNAELQIYKPWLDTDFIDELGGRHEMSEFMIACGFDYKMSVEKAYSTDSNMLGATHEAKDLEYLHSSVKIVNPIMGVKFWDESVKIPAEEVTVRFEQGHPVALNGKTFSDDVEMMLEANRIGGRHGLGMSDQIENRIIEAKSRGIYEAPGMALLHIAYERLLTGIHNEDTIEQYHAHGRQLGRLLYQGRWFDSQALMLRDSLQRWVASQITGEVTLELRRGNDYSILNTVSENLTYKPERLTMEKGDSVFSPDDRIGQLTMRNLDITDTREKLFGYAKTGLLSSSAASGVPQVENLENKGQ</sequence>
<evidence type="ECO:0000255" key="1">
    <source>
        <dbReference type="HAMAP-Rule" id="MF_00581"/>
    </source>
</evidence>
<comment type="catalytic activity">
    <reaction evidence="1">
        <text>L-citrulline + L-aspartate + ATP = 2-(N(omega)-L-arginino)succinate + AMP + diphosphate + H(+)</text>
        <dbReference type="Rhea" id="RHEA:10932"/>
        <dbReference type="ChEBI" id="CHEBI:15378"/>
        <dbReference type="ChEBI" id="CHEBI:29991"/>
        <dbReference type="ChEBI" id="CHEBI:30616"/>
        <dbReference type="ChEBI" id="CHEBI:33019"/>
        <dbReference type="ChEBI" id="CHEBI:57472"/>
        <dbReference type="ChEBI" id="CHEBI:57743"/>
        <dbReference type="ChEBI" id="CHEBI:456215"/>
        <dbReference type="EC" id="6.3.4.5"/>
    </reaction>
</comment>
<comment type="pathway">
    <text evidence="1">Amino-acid biosynthesis; L-arginine biosynthesis; L-arginine from L-ornithine and carbamoyl phosphate: step 2/3.</text>
</comment>
<comment type="subunit">
    <text evidence="1">Homotetramer.</text>
</comment>
<comment type="subcellular location">
    <subcellularLocation>
        <location evidence="1">Cytoplasm</location>
    </subcellularLocation>
</comment>
<comment type="similarity">
    <text evidence="1">Belongs to the argininosuccinate synthase family. Type 2 subfamily.</text>
</comment>
<organism>
    <name type="scientific">Escherichia coli O9:H4 (strain HS)</name>
    <dbReference type="NCBI Taxonomy" id="331112"/>
    <lineage>
        <taxon>Bacteria</taxon>
        <taxon>Pseudomonadati</taxon>
        <taxon>Pseudomonadota</taxon>
        <taxon>Gammaproteobacteria</taxon>
        <taxon>Enterobacterales</taxon>
        <taxon>Enterobacteriaceae</taxon>
        <taxon>Escherichia</taxon>
    </lineage>
</organism>
<dbReference type="EC" id="6.3.4.5" evidence="1"/>
<dbReference type="EMBL" id="CP000802">
    <property type="protein sequence ID" value="ABV07591.1"/>
    <property type="molecule type" value="Genomic_DNA"/>
</dbReference>
<dbReference type="RefSeq" id="WP_000207665.1">
    <property type="nucleotide sequence ID" value="NC_009800.1"/>
</dbReference>
<dbReference type="SMR" id="A8A4Y7"/>
<dbReference type="KEGG" id="ecx:EcHS_A3364"/>
<dbReference type="HOGENOM" id="CLU_032784_4_1_6"/>
<dbReference type="UniPathway" id="UPA00068">
    <property type="reaction ID" value="UER00113"/>
</dbReference>
<dbReference type="GO" id="GO:0005737">
    <property type="term" value="C:cytoplasm"/>
    <property type="evidence" value="ECO:0007669"/>
    <property type="project" value="UniProtKB-SubCell"/>
</dbReference>
<dbReference type="GO" id="GO:0004055">
    <property type="term" value="F:argininosuccinate synthase activity"/>
    <property type="evidence" value="ECO:0007669"/>
    <property type="project" value="UniProtKB-UniRule"/>
</dbReference>
<dbReference type="GO" id="GO:0005524">
    <property type="term" value="F:ATP binding"/>
    <property type="evidence" value="ECO:0007669"/>
    <property type="project" value="UniProtKB-UniRule"/>
</dbReference>
<dbReference type="GO" id="GO:0042803">
    <property type="term" value="F:protein homodimerization activity"/>
    <property type="evidence" value="ECO:0007669"/>
    <property type="project" value="InterPro"/>
</dbReference>
<dbReference type="GO" id="GO:0000053">
    <property type="term" value="P:argininosuccinate metabolic process"/>
    <property type="evidence" value="ECO:0007669"/>
    <property type="project" value="TreeGrafter"/>
</dbReference>
<dbReference type="GO" id="GO:0006526">
    <property type="term" value="P:L-arginine biosynthetic process"/>
    <property type="evidence" value="ECO:0007669"/>
    <property type="project" value="UniProtKB-UniRule"/>
</dbReference>
<dbReference type="GO" id="GO:0000050">
    <property type="term" value="P:urea cycle"/>
    <property type="evidence" value="ECO:0007669"/>
    <property type="project" value="TreeGrafter"/>
</dbReference>
<dbReference type="CDD" id="cd01999">
    <property type="entry name" value="ASS"/>
    <property type="match status" value="1"/>
</dbReference>
<dbReference type="FunFam" id="1.10.287.400:FF:000001">
    <property type="entry name" value="Argininosuccinate synthase"/>
    <property type="match status" value="1"/>
</dbReference>
<dbReference type="Gene3D" id="1.10.287.400">
    <property type="match status" value="1"/>
</dbReference>
<dbReference type="Gene3D" id="3.90.1260.10">
    <property type="entry name" value="Argininosuccinate synthetase, chain A, domain 2"/>
    <property type="match status" value="1"/>
</dbReference>
<dbReference type="Gene3D" id="3.40.50.620">
    <property type="entry name" value="HUPs"/>
    <property type="match status" value="1"/>
</dbReference>
<dbReference type="HAMAP" id="MF_00581">
    <property type="entry name" value="Arg_succ_synth_type2"/>
    <property type="match status" value="1"/>
</dbReference>
<dbReference type="InterPro" id="IPR023437">
    <property type="entry name" value="Arg_succ_synth_type2_subfam"/>
</dbReference>
<dbReference type="InterPro" id="IPR048268">
    <property type="entry name" value="Arginosuc_syn_C"/>
</dbReference>
<dbReference type="InterPro" id="IPR048267">
    <property type="entry name" value="Arginosuc_syn_N"/>
</dbReference>
<dbReference type="InterPro" id="IPR001518">
    <property type="entry name" value="Arginosuc_synth"/>
</dbReference>
<dbReference type="InterPro" id="IPR018223">
    <property type="entry name" value="Arginosuc_synth_CS"/>
</dbReference>
<dbReference type="InterPro" id="IPR023434">
    <property type="entry name" value="Arginosuc_synth_type_1_subfam"/>
</dbReference>
<dbReference type="InterPro" id="IPR024074">
    <property type="entry name" value="AS_cat/multimer_dom_body"/>
</dbReference>
<dbReference type="InterPro" id="IPR024073">
    <property type="entry name" value="AS_multimer_C_tail"/>
</dbReference>
<dbReference type="InterPro" id="IPR014729">
    <property type="entry name" value="Rossmann-like_a/b/a_fold"/>
</dbReference>
<dbReference type="NCBIfam" id="TIGR00032">
    <property type="entry name" value="argG"/>
    <property type="match status" value="1"/>
</dbReference>
<dbReference type="NCBIfam" id="NF003779">
    <property type="entry name" value="PRK05370.1"/>
    <property type="match status" value="1"/>
</dbReference>
<dbReference type="PANTHER" id="PTHR11587">
    <property type="entry name" value="ARGININOSUCCINATE SYNTHASE"/>
    <property type="match status" value="1"/>
</dbReference>
<dbReference type="PANTHER" id="PTHR11587:SF2">
    <property type="entry name" value="ARGININOSUCCINATE SYNTHASE"/>
    <property type="match status" value="1"/>
</dbReference>
<dbReference type="Pfam" id="PF20979">
    <property type="entry name" value="Arginosuc_syn_C"/>
    <property type="match status" value="1"/>
</dbReference>
<dbReference type="Pfam" id="PF00764">
    <property type="entry name" value="Arginosuc_synth"/>
    <property type="match status" value="1"/>
</dbReference>
<dbReference type="SUPFAM" id="SSF52402">
    <property type="entry name" value="Adenine nucleotide alpha hydrolases-like"/>
    <property type="match status" value="1"/>
</dbReference>
<dbReference type="SUPFAM" id="SSF69864">
    <property type="entry name" value="Argininosuccinate synthetase, C-terminal domain"/>
    <property type="match status" value="1"/>
</dbReference>
<dbReference type="PROSITE" id="PS00564">
    <property type="entry name" value="ARGININOSUCCIN_SYN_1"/>
    <property type="match status" value="1"/>
</dbReference>
<dbReference type="PROSITE" id="PS00565">
    <property type="entry name" value="ARGININOSUCCIN_SYN_2"/>
    <property type="match status" value="1"/>
</dbReference>
<gene>
    <name evidence="1" type="primary">argG</name>
    <name type="ordered locus">EcHS_A3364</name>
</gene>
<protein>
    <recommendedName>
        <fullName evidence="1">Argininosuccinate synthase</fullName>
        <ecNumber evidence="1">6.3.4.5</ecNumber>
    </recommendedName>
    <alternativeName>
        <fullName evidence="1">Citrulline--aspartate ligase</fullName>
    </alternativeName>
</protein>
<name>ASSY_ECOHS</name>
<feature type="chain" id="PRO_1000061196" description="Argininosuccinate synthase">
    <location>
        <begin position="1"/>
        <end position="447"/>
    </location>
</feature>
<feature type="binding site" evidence="1">
    <location>
        <begin position="17"/>
        <end position="25"/>
    </location>
    <ligand>
        <name>ATP</name>
        <dbReference type="ChEBI" id="CHEBI:30616"/>
    </ligand>
</feature>
<feature type="binding site" evidence="1">
    <location>
        <position position="43"/>
    </location>
    <ligand>
        <name>ATP</name>
        <dbReference type="ChEBI" id="CHEBI:30616"/>
    </ligand>
</feature>
<feature type="binding site" evidence="1">
    <location>
        <position position="99"/>
    </location>
    <ligand>
        <name>L-citrulline</name>
        <dbReference type="ChEBI" id="CHEBI:57743"/>
    </ligand>
</feature>
<feature type="binding site" evidence="1">
    <location>
        <position position="129"/>
    </location>
    <ligand>
        <name>ATP</name>
        <dbReference type="ChEBI" id="CHEBI:30616"/>
    </ligand>
</feature>
<feature type="binding site" evidence="1">
    <location>
        <position position="131"/>
    </location>
    <ligand>
        <name>ATP</name>
        <dbReference type="ChEBI" id="CHEBI:30616"/>
    </ligand>
</feature>
<feature type="binding site" evidence="1">
    <location>
        <position position="131"/>
    </location>
    <ligand>
        <name>L-aspartate</name>
        <dbReference type="ChEBI" id="CHEBI:29991"/>
    </ligand>
</feature>
<feature type="binding site" evidence="1">
    <location>
        <position position="135"/>
    </location>
    <ligand>
        <name>L-aspartate</name>
        <dbReference type="ChEBI" id="CHEBI:29991"/>
    </ligand>
</feature>
<feature type="binding site" evidence="1">
    <location>
        <position position="135"/>
    </location>
    <ligand>
        <name>L-citrulline</name>
        <dbReference type="ChEBI" id="CHEBI:57743"/>
    </ligand>
</feature>
<feature type="binding site" evidence="1">
    <location>
        <position position="136"/>
    </location>
    <ligand>
        <name>ATP</name>
        <dbReference type="ChEBI" id="CHEBI:30616"/>
    </ligand>
</feature>
<feature type="binding site" evidence="1">
    <location>
        <position position="136"/>
    </location>
    <ligand>
        <name>L-aspartate</name>
        <dbReference type="ChEBI" id="CHEBI:29991"/>
    </ligand>
</feature>
<feature type="binding site" evidence="1">
    <location>
        <position position="139"/>
    </location>
    <ligand>
        <name>L-citrulline</name>
        <dbReference type="ChEBI" id="CHEBI:57743"/>
    </ligand>
</feature>
<feature type="binding site" evidence="1">
    <location>
        <position position="192"/>
    </location>
    <ligand>
        <name>L-citrulline</name>
        <dbReference type="ChEBI" id="CHEBI:57743"/>
    </ligand>
</feature>
<feature type="binding site" evidence="1">
    <location>
        <position position="194"/>
    </location>
    <ligand>
        <name>ATP</name>
        <dbReference type="ChEBI" id="CHEBI:30616"/>
    </ligand>
</feature>
<feature type="binding site" evidence="1">
    <location>
        <position position="201"/>
    </location>
    <ligand>
        <name>L-citrulline</name>
        <dbReference type="ChEBI" id="CHEBI:57743"/>
    </ligand>
</feature>
<feature type="binding site" evidence="1">
    <location>
        <position position="203"/>
    </location>
    <ligand>
        <name>L-citrulline</name>
        <dbReference type="ChEBI" id="CHEBI:57743"/>
    </ligand>
</feature>
<feature type="binding site" evidence="1">
    <location>
        <position position="280"/>
    </location>
    <ligand>
        <name>L-citrulline</name>
        <dbReference type="ChEBI" id="CHEBI:57743"/>
    </ligand>
</feature>
<proteinExistence type="inferred from homology"/>
<accession>A8A4Y7</accession>
<keyword id="KW-0028">Amino-acid biosynthesis</keyword>
<keyword id="KW-0055">Arginine biosynthesis</keyword>
<keyword id="KW-0067">ATP-binding</keyword>
<keyword id="KW-0963">Cytoplasm</keyword>
<keyword id="KW-0436">Ligase</keyword>
<keyword id="KW-0547">Nucleotide-binding</keyword>